<comment type="function">
    <text evidence="1">Allows the formation of correctly charged Gln-tRNA(Gln) through the transamidation of misacylated Glu-tRNA(Gln) in organisms which lack glutaminyl-tRNA synthetase. The reaction takes place in the presence of glutamine and ATP through an activated gamma-phospho-Glu-tRNA(Gln).</text>
</comment>
<comment type="catalytic activity">
    <reaction evidence="1">
        <text>L-glutamyl-tRNA(Gln) + L-glutamine + ATP + H2O = L-glutaminyl-tRNA(Gln) + L-glutamate + ADP + phosphate + H(+)</text>
        <dbReference type="Rhea" id="RHEA:17521"/>
        <dbReference type="Rhea" id="RHEA-COMP:9681"/>
        <dbReference type="Rhea" id="RHEA-COMP:9684"/>
        <dbReference type="ChEBI" id="CHEBI:15377"/>
        <dbReference type="ChEBI" id="CHEBI:15378"/>
        <dbReference type="ChEBI" id="CHEBI:29985"/>
        <dbReference type="ChEBI" id="CHEBI:30616"/>
        <dbReference type="ChEBI" id="CHEBI:43474"/>
        <dbReference type="ChEBI" id="CHEBI:58359"/>
        <dbReference type="ChEBI" id="CHEBI:78520"/>
        <dbReference type="ChEBI" id="CHEBI:78521"/>
        <dbReference type="ChEBI" id="CHEBI:456216"/>
        <dbReference type="EC" id="6.3.5.7"/>
    </reaction>
</comment>
<comment type="subunit">
    <text evidence="1">Heterotrimer of A, B and C subunits.</text>
</comment>
<comment type="similarity">
    <text evidence="1">Belongs to the amidase family. GatA subfamily.</text>
</comment>
<gene>
    <name evidence="1" type="primary">gatA</name>
    <name type="ordered locus">NT01CX_0431</name>
</gene>
<sequence>MELFNKTAHELIDMIKSKEVKVEEVVKSYIARTECIDEKIGAYLYLSKESALKEAKLLDEKIQRGEKLKGLWGVPVGIKDNISVSGMQNTCASKILENYISPYDATVISRLKENNGIILGKLNMDEFAMGSSNENSAFKIVRNPWDLERIPGGSSGGSTAAVASREIPLSLGSETGGSVRQPAALCGVVGLKPTYGRISRYGVISFASTLDQVGTIGRDVTDCAILTEVISGFDKRDSTSARVAVPNYKESLKKDLTGIRIGLPKEFFKEDLDESIRKQIEDAIKILEKNGAEIKICSLPLAEYSLSAYYIISTAEASSNLARIDGIRYGRRINTLDKHEDIYIQSRNEGFGEEVKKRIMLGTYVLSKGCYEKYYEKALKVRTLIKEDFKRVLKEVDAIITPTSKVTAFKFGERTKEVLSMYSSDEYTVPASIAGLPAISIPCGFSKGLPVGFQLIGDYFREDILFNIGYSYEQSTDFHKIMAKL</sequence>
<dbReference type="EC" id="6.3.5.7" evidence="1"/>
<dbReference type="EMBL" id="CP000382">
    <property type="protein sequence ID" value="ABK62448.1"/>
    <property type="molecule type" value="Genomic_DNA"/>
</dbReference>
<dbReference type="RefSeq" id="WP_011722886.1">
    <property type="nucleotide sequence ID" value="NC_008593.1"/>
</dbReference>
<dbReference type="SMR" id="A0Q2Q0"/>
<dbReference type="STRING" id="386415.NT01CX_0431"/>
<dbReference type="KEGG" id="cno:NT01CX_0431"/>
<dbReference type="PATRIC" id="fig|386415.7.peg.1935"/>
<dbReference type="eggNOG" id="COG0154">
    <property type="taxonomic scope" value="Bacteria"/>
</dbReference>
<dbReference type="HOGENOM" id="CLU_009600_0_3_9"/>
<dbReference type="Proteomes" id="UP000008220">
    <property type="component" value="Chromosome"/>
</dbReference>
<dbReference type="GO" id="GO:0030956">
    <property type="term" value="C:glutamyl-tRNA(Gln) amidotransferase complex"/>
    <property type="evidence" value="ECO:0007669"/>
    <property type="project" value="InterPro"/>
</dbReference>
<dbReference type="GO" id="GO:0005524">
    <property type="term" value="F:ATP binding"/>
    <property type="evidence" value="ECO:0007669"/>
    <property type="project" value="UniProtKB-KW"/>
</dbReference>
<dbReference type="GO" id="GO:0050567">
    <property type="term" value="F:glutaminyl-tRNA synthase (glutamine-hydrolyzing) activity"/>
    <property type="evidence" value="ECO:0007669"/>
    <property type="project" value="UniProtKB-UniRule"/>
</dbReference>
<dbReference type="GO" id="GO:0006412">
    <property type="term" value="P:translation"/>
    <property type="evidence" value="ECO:0007669"/>
    <property type="project" value="UniProtKB-UniRule"/>
</dbReference>
<dbReference type="Gene3D" id="3.90.1300.10">
    <property type="entry name" value="Amidase signature (AS) domain"/>
    <property type="match status" value="1"/>
</dbReference>
<dbReference type="HAMAP" id="MF_00120">
    <property type="entry name" value="GatA"/>
    <property type="match status" value="1"/>
</dbReference>
<dbReference type="InterPro" id="IPR000120">
    <property type="entry name" value="Amidase"/>
</dbReference>
<dbReference type="InterPro" id="IPR023631">
    <property type="entry name" value="Amidase_dom"/>
</dbReference>
<dbReference type="InterPro" id="IPR036928">
    <property type="entry name" value="AS_sf"/>
</dbReference>
<dbReference type="InterPro" id="IPR004412">
    <property type="entry name" value="GatA"/>
</dbReference>
<dbReference type="NCBIfam" id="TIGR00132">
    <property type="entry name" value="gatA"/>
    <property type="match status" value="1"/>
</dbReference>
<dbReference type="PANTHER" id="PTHR11895:SF151">
    <property type="entry name" value="GLUTAMYL-TRNA(GLN) AMIDOTRANSFERASE SUBUNIT A"/>
    <property type="match status" value="1"/>
</dbReference>
<dbReference type="PANTHER" id="PTHR11895">
    <property type="entry name" value="TRANSAMIDASE"/>
    <property type="match status" value="1"/>
</dbReference>
<dbReference type="Pfam" id="PF01425">
    <property type="entry name" value="Amidase"/>
    <property type="match status" value="1"/>
</dbReference>
<dbReference type="SUPFAM" id="SSF75304">
    <property type="entry name" value="Amidase signature (AS) enzymes"/>
    <property type="match status" value="1"/>
</dbReference>
<evidence type="ECO:0000255" key="1">
    <source>
        <dbReference type="HAMAP-Rule" id="MF_00120"/>
    </source>
</evidence>
<protein>
    <recommendedName>
        <fullName evidence="1">Glutamyl-tRNA(Gln) amidotransferase subunit A</fullName>
        <shortName evidence="1">Glu-ADT subunit A</shortName>
        <ecNumber evidence="1">6.3.5.7</ecNumber>
    </recommendedName>
</protein>
<accession>A0Q2Q0</accession>
<organism>
    <name type="scientific">Clostridium novyi (strain NT)</name>
    <dbReference type="NCBI Taxonomy" id="386415"/>
    <lineage>
        <taxon>Bacteria</taxon>
        <taxon>Bacillati</taxon>
        <taxon>Bacillota</taxon>
        <taxon>Clostridia</taxon>
        <taxon>Eubacteriales</taxon>
        <taxon>Clostridiaceae</taxon>
        <taxon>Clostridium</taxon>
    </lineage>
</organism>
<proteinExistence type="inferred from homology"/>
<reference key="1">
    <citation type="journal article" date="2006" name="Nat. Biotechnol.">
        <title>The genome and transcriptomes of the anti-tumor agent Clostridium novyi-NT.</title>
        <authorList>
            <person name="Bettegowda C."/>
            <person name="Huang X."/>
            <person name="Lin J."/>
            <person name="Cheong I."/>
            <person name="Kohli M."/>
            <person name="Szabo S.A."/>
            <person name="Zhang X."/>
            <person name="Diaz L.A. Jr."/>
            <person name="Velculescu V.E."/>
            <person name="Parmigiani G."/>
            <person name="Kinzler K.W."/>
            <person name="Vogelstein B."/>
            <person name="Zhou S."/>
        </authorList>
    </citation>
    <scope>NUCLEOTIDE SEQUENCE [LARGE SCALE GENOMIC DNA]</scope>
    <source>
        <strain>NT</strain>
    </source>
</reference>
<keyword id="KW-0067">ATP-binding</keyword>
<keyword id="KW-0436">Ligase</keyword>
<keyword id="KW-0547">Nucleotide-binding</keyword>
<keyword id="KW-0648">Protein biosynthesis</keyword>
<keyword id="KW-1185">Reference proteome</keyword>
<name>GATA_CLONN</name>
<feature type="chain" id="PRO_1000015825" description="Glutamyl-tRNA(Gln) amidotransferase subunit A">
    <location>
        <begin position="1"/>
        <end position="485"/>
    </location>
</feature>
<feature type="active site" description="Charge relay system" evidence="1">
    <location>
        <position position="79"/>
    </location>
</feature>
<feature type="active site" description="Charge relay system" evidence="1">
    <location>
        <position position="154"/>
    </location>
</feature>
<feature type="active site" description="Acyl-ester intermediate" evidence="1">
    <location>
        <position position="178"/>
    </location>
</feature>